<name>MFR2_PHOSM</name>
<evidence type="ECO:0000250" key="1">
    <source>
        <dbReference type="UniProtKB" id="A0A345BJP7"/>
    </source>
</evidence>
<evidence type="ECO:0000269" key="2">
    <source>
    </source>
</evidence>
<evidence type="ECO:0000269" key="3">
    <source>
    </source>
</evidence>
<evidence type="ECO:0000269" key="4">
    <source>
    </source>
</evidence>
<evidence type="ECO:0000269" key="5">
    <source>
    </source>
</evidence>
<evidence type="ECO:0000303" key="6">
    <source>
    </source>
</evidence>
<evidence type="ECO:0000305" key="7"/>
<evidence type="ECO:0000305" key="8">
    <source>
    </source>
</evidence>
<feature type="chain" id="PRO_0000447840" description="Oxidoreductase R2">
    <location>
        <begin position="1"/>
        <end position="293"/>
    </location>
</feature>
<dbReference type="EC" id="1.-.-.-" evidence="8"/>
<dbReference type="EMBL" id="KU946987">
    <property type="protein sequence ID" value="AMY15070.1"/>
    <property type="molecule type" value="Genomic_DNA"/>
</dbReference>
<dbReference type="SMR" id="A0A3G1DJF4"/>
<dbReference type="GO" id="GO:0016491">
    <property type="term" value="F:oxidoreductase activity"/>
    <property type="evidence" value="ECO:0007669"/>
    <property type="project" value="UniProtKB-KW"/>
</dbReference>
<dbReference type="InterPro" id="IPR044053">
    <property type="entry name" value="AsaB-like"/>
</dbReference>
<dbReference type="NCBIfam" id="NF041278">
    <property type="entry name" value="CmcJ_NvfI_EfuI"/>
    <property type="match status" value="1"/>
</dbReference>
<dbReference type="PANTHER" id="PTHR34598">
    <property type="entry name" value="BLL6449 PROTEIN"/>
    <property type="match status" value="1"/>
</dbReference>
<dbReference type="PANTHER" id="PTHR34598:SF3">
    <property type="entry name" value="OXIDOREDUCTASE AN1597"/>
    <property type="match status" value="1"/>
</dbReference>
<protein>
    <recommendedName>
        <fullName evidence="6">Oxidoreductase R2</fullName>
        <ecNumber evidence="8">1.-.-.-</ecNumber>
    </recommendedName>
    <alternativeName>
        <fullName evidence="6">Squalestatin S1 biosynthesis cluster protein R2</fullName>
    </alternativeName>
</protein>
<organism>
    <name type="scientific">Phoma sp. (strain ATCC 20986 / MF5453)</name>
    <dbReference type="NCBI Taxonomy" id="1828523"/>
    <lineage>
        <taxon>Eukaryota</taxon>
        <taxon>Fungi</taxon>
        <taxon>Dikarya</taxon>
        <taxon>Ascomycota</taxon>
        <taxon>Pezizomycotina</taxon>
        <taxon>Dothideomycetes</taxon>
        <taxon>Pleosporomycetidae</taxon>
        <taxon>Pleosporales</taxon>
        <taxon>Pleosporineae</taxon>
        <taxon>Didymellaceae</taxon>
        <taxon>Phoma</taxon>
    </lineage>
</organism>
<proteinExistence type="inferred from homology"/>
<keyword id="KW-0560">Oxidoreductase</keyword>
<comment type="function">
    <text evidence="1 2 3 4 5 8">Oxidoreductase; part of the gene cluster that mediates the biosynthesis of squalestatin S1 (SQS1, also known as zaragozic acid A), a heavily oxidized fungal polyketide that offers potent cholesterol lowering activity by targeting squalene synthase (SS) (PubMed:27056201). SQS1 is composed of a 2,8-dioxobicyclic[3.2.1]octane-3,4,5-tricarboxyclic acid core that is connected to two lipophilic polyketide arms (PubMed:27056201). These initial steps feature the priming of an unusual benzoic acid starter unit onto the highly reducing polyketide synthase pks2, followed by oxaloacetate extension and product release to generate a tricarboxylic acid containing product (By similarity). The phenylalanine ammonia lyase (PAL) M7 and the acyl-CoA ligase M9 are involved in transforming phenylalanine into benzoyl-CoA (By similarity). The citrate synthase-like protein R3 is involved in connecting the C-alpha-carbons of the hexaketide chain and oxaloacetate to afford the tricarboxylic acid unit (By similarity). The potential hydrolytic enzymes, M8 and M10, are in close proximity to pks2 and may participate in product release (By similarity). On the other side, the tetraketide arm is synthesized by a the squalestatin tetraketide synthase pks1 and enzymatically esterified to the core in the last biosynthetic step, by the acetyltransferase M4 (PubMed:11251290, PubMed:15489970, PubMed:28106181). The biosynthesis of the tetraketide must involve 3 rounds of chain extension (PubMed:11251290, PubMed:15489970, PubMed:28106181). After the first and second rounds methyl-transfer occurs, and in all rounds of extension the ketoreductase and dehydratase are active (PubMed:11251290, PubMed:15489970, PubMed:28106181). The enoyl reductase and C-MeT of pks1 are not active in the final round of extension (PubMed:11251290, PubMed:15489970, PubMed:28106181). The acetyltransferase M4 appears to have a broad substrate selectivity for its acyl CoA substrate, allowing the in vitro synthesis of novel squalestatins (Probable). The biosynthesis of SQS1 requires several oxidative steps likely performed by oxidoreductases M1, R1 and R2 (Probable). Finally, in support of the identification of the cluster as being responsible for SQS1 production, the cluster contains a gene encoding a putative squalene synthase (SS) R6, suggesting a likely mechanism for self-resistance (Probable).</text>
</comment>
<comment type="pathway">
    <text evidence="8">Secondary metabolite biosynthesis.</text>
</comment>
<comment type="similarity">
    <text evidence="7">Belongs to the asaB hydroxylase/desaturase family.</text>
</comment>
<sequence>MATATTTLHSTTGTVYVADGTTDGKVGYYNHTDDSTNVIRKPIPIEVEDARTLSKSPTTKAEGYQLVNFHTKIPEEHFLNSKLPENKELIEEVYFDECRRLVQEVTGAAEAYPYVYRVRNQEQNAKESNKSNFHTDFVPIVHVDRDDVTAPQRLRASLGAEKADMLLSKYKSYGSINVWRPVKNMVQKWPLMLVDHKSIEDWDYSTHMFTLHSSNDERVATRGAKEHETILTHDKRYRYIYASDMTPEEAWLFFAFHSDPALGIPHGAFWDDSTKEEALTRCSIEVRIWVFFD</sequence>
<reference key="1">
    <citation type="journal article" date="2016" name="Chem. Commun. (Camb.)">
        <title>Identification of genes encoding squalestatin S1 biosynthesis and in vitro production of new squalestatin analogues.</title>
        <authorList>
            <person name="Bonsch B."/>
            <person name="Belt V."/>
            <person name="Bartel C."/>
            <person name="Duensing N."/>
            <person name="Koziol M."/>
            <person name="Lazarus C.M."/>
            <person name="Bailey A.M."/>
            <person name="Simpson T.J."/>
            <person name="Cox R.J."/>
        </authorList>
    </citation>
    <scope>NUCLEOTIDE SEQUENCE [GENOMIC DNA]</scope>
    <scope>FUNCTION</scope>
</reference>
<reference key="2">
    <citation type="journal article" date="2001" name="Chem. Biol.">
        <title>Design and utility of oligonucleotide gene probes for fungal polyketide synthases.</title>
        <authorList>
            <person name="Nicholson T.P."/>
            <person name="Rudd B.A."/>
            <person name="Dawson M."/>
            <person name="Lazarus C.M."/>
            <person name="Simpson T.J."/>
            <person name="Cox R.J."/>
        </authorList>
    </citation>
    <scope>FUNCTION</scope>
</reference>
<reference key="3">
    <citation type="journal article" date="2004" name="Chem. Commun. (Camb.)">
        <title>Rapid cloning and expression of a fungal polyketide synthase gene involved in squalestatin biosynthesis.</title>
        <authorList>
            <person name="Cox R.J."/>
            <person name="Glod F."/>
            <person name="Hurley D."/>
            <person name="Lazarus C.M."/>
            <person name="Nicholson T.P."/>
            <person name="Rudd B.A."/>
            <person name="Simpson T.J."/>
            <person name="Wilkinson B."/>
            <person name="Zhang Y."/>
        </authorList>
    </citation>
    <scope>FUNCTION</scope>
</reference>
<reference key="4">
    <citation type="journal article" date="2017" name="Chem. Commun. (Camb.)">
        <title>In vitro kinetic study of the squalestatin tetraketide synthase dehydratase reveals the stereochemical course of a fungal highly reducing polyketide synthase.</title>
        <authorList>
            <person name="Liddle E."/>
            <person name="Scott A."/>
            <person name="Han L.C."/>
            <person name="Ivison D."/>
            <person name="Simpson T.J."/>
            <person name="Willis C.L."/>
            <person name="Cox R.J."/>
        </authorList>
    </citation>
    <scope>FUNCTION</scope>
</reference>
<accession>A0A3G1DJF4</accession>
<gene>
    <name evidence="6" type="primary">R2</name>
</gene>